<evidence type="ECO:0000255" key="1">
    <source>
        <dbReference type="HAMAP-Rule" id="MF_03015"/>
    </source>
</evidence>
<evidence type="ECO:0000256" key="2">
    <source>
        <dbReference type="SAM" id="MobiDB-lite"/>
    </source>
</evidence>
<evidence type="ECO:0000305" key="3"/>
<keyword id="KW-0963">Cytoplasm</keyword>
<keyword id="KW-1185">Reference proteome</keyword>
<keyword id="KW-0687">Ribonucleoprotein</keyword>
<keyword id="KW-0689">Ribosomal protein</keyword>
<name>RSSA_ASPNC</name>
<proteinExistence type="inferred from homology"/>
<feature type="chain" id="PRO_0000371621" description="Small ribosomal subunit protein uS2">
    <location>
        <begin position="1"/>
        <end position="298"/>
    </location>
</feature>
<feature type="region of interest" description="Disordered" evidence="2">
    <location>
        <begin position="272"/>
        <end position="298"/>
    </location>
</feature>
<organism>
    <name type="scientific">Aspergillus niger (strain ATCC MYA-4892 / CBS 513.88 / FGSC A1513)</name>
    <dbReference type="NCBI Taxonomy" id="425011"/>
    <lineage>
        <taxon>Eukaryota</taxon>
        <taxon>Fungi</taxon>
        <taxon>Dikarya</taxon>
        <taxon>Ascomycota</taxon>
        <taxon>Pezizomycotina</taxon>
        <taxon>Eurotiomycetes</taxon>
        <taxon>Eurotiomycetidae</taxon>
        <taxon>Eurotiales</taxon>
        <taxon>Aspergillaceae</taxon>
        <taxon>Aspergillus</taxon>
        <taxon>Aspergillus subgen. Circumdati</taxon>
    </lineage>
</organism>
<gene>
    <name type="primary">rps0</name>
    <name type="ORF">An02g09200</name>
</gene>
<reference key="1">
    <citation type="journal article" date="2007" name="Nat. Biotechnol.">
        <title>Genome sequencing and analysis of the versatile cell factory Aspergillus niger CBS 513.88.</title>
        <authorList>
            <person name="Pel H.J."/>
            <person name="de Winde J.H."/>
            <person name="Archer D.B."/>
            <person name="Dyer P.S."/>
            <person name="Hofmann G."/>
            <person name="Schaap P.J."/>
            <person name="Turner G."/>
            <person name="de Vries R.P."/>
            <person name="Albang R."/>
            <person name="Albermann K."/>
            <person name="Andersen M.R."/>
            <person name="Bendtsen J.D."/>
            <person name="Benen J.A.E."/>
            <person name="van den Berg M."/>
            <person name="Breestraat S."/>
            <person name="Caddick M.X."/>
            <person name="Contreras R."/>
            <person name="Cornell M."/>
            <person name="Coutinho P.M."/>
            <person name="Danchin E.G.J."/>
            <person name="Debets A.J.M."/>
            <person name="Dekker P."/>
            <person name="van Dijck P.W.M."/>
            <person name="van Dijk A."/>
            <person name="Dijkhuizen L."/>
            <person name="Driessen A.J.M."/>
            <person name="d'Enfert C."/>
            <person name="Geysens S."/>
            <person name="Goosen C."/>
            <person name="Groot G.S.P."/>
            <person name="de Groot P.W.J."/>
            <person name="Guillemette T."/>
            <person name="Henrissat B."/>
            <person name="Herweijer M."/>
            <person name="van den Hombergh J.P.T.W."/>
            <person name="van den Hondel C.A.M.J.J."/>
            <person name="van der Heijden R.T.J.M."/>
            <person name="van der Kaaij R.M."/>
            <person name="Klis F.M."/>
            <person name="Kools H.J."/>
            <person name="Kubicek C.P."/>
            <person name="van Kuyk P.A."/>
            <person name="Lauber J."/>
            <person name="Lu X."/>
            <person name="van der Maarel M.J.E.C."/>
            <person name="Meulenberg R."/>
            <person name="Menke H."/>
            <person name="Mortimer M.A."/>
            <person name="Nielsen J."/>
            <person name="Oliver S.G."/>
            <person name="Olsthoorn M."/>
            <person name="Pal K."/>
            <person name="van Peij N.N.M.E."/>
            <person name="Ram A.F.J."/>
            <person name="Rinas U."/>
            <person name="Roubos J.A."/>
            <person name="Sagt C.M.J."/>
            <person name="Schmoll M."/>
            <person name="Sun J."/>
            <person name="Ussery D."/>
            <person name="Varga J."/>
            <person name="Vervecken W."/>
            <person name="van de Vondervoort P.J.J."/>
            <person name="Wedler H."/>
            <person name="Woesten H.A.B."/>
            <person name="Zeng A.-P."/>
            <person name="van Ooyen A.J.J."/>
            <person name="Visser J."/>
            <person name="Stam H."/>
        </authorList>
    </citation>
    <scope>NUCLEOTIDE SEQUENCE [LARGE SCALE GENOMIC DNA]</scope>
    <source>
        <strain>ATCC MYA-4892 / CBS 513.88 / FGSC A1513</strain>
    </source>
</reference>
<accession>A2QE32</accession>
<dbReference type="EMBL" id="AM270022">
    <property type="protein sequence ID" value="CAK44328.1"/>
    <property type="molecule type" value="Genomic_DNA"/>
</dbReference>
<dbReference type="RefSeq" id="XP_001400053.1">
    <property type="nucleotide sequence ID" value="XM_001400016.2"/>
</dbReference>
<dbReference type="SMR" id="A2QE32"/>
<dbReference type="EnsemblFungi" id="CAK44328">
    <property type="protein sequence ID" value="CAK44328"/>
    <property type="gene ID" value="An02g09200"/>
</dbReference>
<dbReference type="GeneID" id="4979410"/>
<dbReference type="KEGG" id="ang:An02g09200"/>
<dbReference type="VEuPathDB" id="FungiDB:An02g09200"/>
<dbReference type="HOGENOM" id="CLU_058171_0_1_1"/>
<dbReference type="Proteomes" id="UP000006706">
    <property type="component" value="Chromosome 4R"/>
</dbReference>
<dbReference type="GO" id="GO:0022627">
    <property type="term" value="C:cytosolic small ribosomal subunit"/>
    <property type="evidence" value="ECO:0007669"/>
    <property type="project" value="UniProtKB-UniRule"/>
</dbReference>
<dbReference type="GO" id="GO:0003735">
    <property type="term" value="F:structural constituent of ribosome"/>
    <property type="evidence" value="ECO:0007669"/>
    <property type="project" value="UniProtKB-UniRule"/>
</dbReference>
<dbReference type="GO" id="GO:0000028">
    <property type="term" value="P:ribosomal small subunit assembly"/>
    <property type="evidence" value="ECO:0007669"/>
    <property type="project" value="UniProtKB-UniRule"/>
</dbReference>
<dbReference type="GO" id="GO:0006412">
    <property type="term" value="P:translation"/>
    <property type="evidence" value="ECO:0007669"/>
    <property type="project" value="UniProtKB-UniRule"/>
</dbReference>
<dbReference type="CDD" id="cd01425">
    <property type="entry name" value="RPS2"/>
    <property type="match status" value="1"/>
</dbReference>
<dbReference type="FunFam" id="3.40.50.10490:FF:000010">
    <property type="entry name" value="40S ribosomal protein S0"/>
    <property type="match status" value="1"/>
</dbReference>
<dbReference type="Gene3D" id="3.40.50.10490">
    <property type="entry name" value="Glucose-6-phosphate isomerase like protein, domain 1"/>
    <property type="match status" value="1"/>
</dbReference>
<dbReference type="HAMAP" id="MF_03015">
    <property type="entry name" value="Ribosomal_S2_euk"/>
    <property type="match status" value="1"/>
</dbReference>
<dbReference type="InterPro" id="IPR001865">
    <property type="entry name" value="Ribosomal_uS2"/>
</dbReference>
<dbReference type="InterPro" id="IPR032281">
    <property type="entry name" value="Ribosomal_uS2_C"/>
</dbReference>
<dbReference type="InterPro" id="IPR018130">
    <property type="entry name" value="Ribosomal_uS2_CS"/>
</dbReference>
<dbReference type="InterPro" id="IPR027498">
    <property type="entry name" value="Ribosomal_uS2_euk"/>
</dbReference>
<dbReference type="InterPro" id="IPR005707">
    <property type="entry name" value="Ribosomal_uS2_euk/arc"/>
</dbReference>
<dbReference type="InterPro" id="IPR023591">
    <property type="entry name" value="Ribosomal_uS2_flav_dom_sf"/>
</dbReference>
<dbReference type="NCBIfam" id="TIGR01012">
    <property type="entry name" value="uS2_euk_arch"/>
    <property type="match status" value="1"/>
</dbReference>
<dbReference type="PANTHER" id="PTHR11489">
    <property type="entry name" value="40S RIBOSOMAL PROTEIN SA"/>
    <property type="match status" value="1"/>
</dbReference>
<dbReference type="Pfam" id="PF16122">
    <property type="entry name" value="40S_SA_C"/>
    <property type="match status" value="1"/>
</dbReference>
<dbReference type="Pfam" id="PF00318">
    <property type="entry name" value="Ribosomal_S2"/>
    <property type="match status" value="2"/>
</dbReference>
<dbReference type="PRINTS" id="PR00395">
    <property type="entry name" value="RIBOSOMALS2"/>
</dbReference>
<dbReference type="SUPFAM" id="SSF52313">
    <property type="entry name" value="Ribosomal protein S2"/>
    <property type="match status" value="1"/>
</dbReference>
<dbReference type="PROSITE" id="PS00963">
    <property type="entry name" value="RIBOSOMAL_S2_2"/>
    <property type="match status" value="1"/>
</dbReference>
<protein>
    <recommendedName>
        <fullName evidence="1">Small ribosomal subunit protein uS2</fullName>
    </recommendedName>
    <alternativeName>
        <fullName evidence="3">40S ribosomal protein S0</fullName>
    </alternativeName>
</protein>
<comment type="function">
    <text evidence="1">Required for the assembly and/or stability of the 40S ribosomal subunit. Required for the processing of the 20S rRNA-precursor to mature 18S rRNA in a late step of the maturation of 40S ribosomal subunits.</text>
</comment>
<comment type="subunit">
    <text evidence="1">Component of the small ribosomal subunit. Mature ribosomes consist of a small (40S) and a large (60S) subunit. The 40S subunit contains about 33 different proteins and 1 molecule of RNA (18S). The 60S subunit contains about 49 different proteins and 3 molecules of RNA (25S, 5.8S and 5S). Interacts with rps21.</text>
</comment>
<comment type="subcellular location">
    <subcellularLocation>
        <location evidence="1">Cytoplasm</location>
    </subcellularLocation>
</comment>
<comment type="similarity">
    <text evidence="1">Belongs to the universal ribosomal protein uS2 family.</text>
</comment>
<sequence>MAPSQLPPIFNPTSQDIEMLLAAQCHLGSKNLQSHMEPYLWKTRPDGVNVINIGKTWEKILLAARIIAAIDNPADICVISARPYGQRAVLKFASHTGATAIAGRFTPGNFTNYITRSFKEPRLIIVTDPRTDAQAIKEASYVNIPVIALCDTDSPTDFVDVAIPTNNKGRHAIGLVWWLLAREVLRLRGTLASREVDWDVVVDLYFYRDPEAEENKEVVEEKVASAEEVGAGAIESGFAGENWDVAGAGAGVPGTAFAAASAAAGAASWEAEGGDWAASSAAPAGESWAEAQPTEAKW</sequence>